<organismHost>
    <name type="scientific">Melanoplus sanguinipes</name>
    <name type="common">Migratory grasshopper</name>
    <dbReference type="NCBI Taxonomy" id="65742"/>
</organismHost>
<name>NMT_MSEPV</name>
<reference key="1">
    <citation type="journal article" date="1999" name="J. Virol.">
        <title>The genome of Melanoplus sanguinipes entomopoxvirus.</title>
        <authorList>
            <person name="Afonso C.L."/>
            <person name="Tulman E.R."/>
            <person name="Lu Z."/>
            <person name="Oma E."/>
            <person name="Kutish G.F."/>
            <person name="Rock D.L."/>
        </authorList>
    </citation>
    <scope>NUCLEOTIDE SEQUENCE [LARGE SCALE GENOMIC DNA]</scope>
    <source>
        <strain>Isolate Tucson</strain>
    </source>
</reference>
<reference key="2">
    <citation type="journal article" date="2002" name="J. Mol. Biol.">
        <title>N-terminal N-myristoylation of proteins: refinement of the sequence motif and its taxon-specific differences.</title>
        <authorList>
            <person name="Maurer-Stroh S."/>
            <person name="Eisenhaber B."/>
            <person name="Eisenhaber F."/>
        </authorList>
    </citation>
    <scope>POSSIBLE FUNCTION</scope>
</reference>
<comment type="function">
    <text evidence="1">Adds a myristoyl group to the N-terminal glycine residue of certain proteins.</text>
</comment>
<comment type="catalytic activity">
    <reaction>
        <text>N-terminal glycyl-[protein] + tetradecanoyl-CoA = N-tetradecanoylglycyl-[protein] + CoA + H(+)</text>
        <dbReference type="Rhea" id="RHEA:15521"/>
        <dbReference type="Rhea" id="RHEA-COMP:12666"/>
        <dbReference type="Rhea" id="RHEA-COMP:12667"/>
        <dbReference type="ChEBI" id="CHEBI:15378"/>
        <dbReference type="ChEBI" id="CHEBI:57287"/>
        <dbReference type="ChEBI" id="CHEBI:57385"/>
        <dbReference type="ChEBI" id="CHEBI:64723"/>
        <dbReference type="ChEBI" id="CHEBI:133050"/>
        <dbReference type="EC" id="2.3.1.97"/>
    </reaction>
</comment>
<comment type="similarity">
    <text evidence="1">Belongs to the NMT family.</text>
</comment>
<dbReference type="EC" id="2.3.1.97"/>
<dbReference type="EMBL" id="AF063866">
    <property type="protein sequence ID" value="AAC97628.1"/>
    <property type="molecule type" value="Genomic_DNA"/>
</dbReference>
<dbReference type="PIR" id="T28233">
    <property type="entry name" value="T28233"/>
</dbReference>
<dbReference type="RefSeq" id="NP_048143.1">
    <property type="nucleotide sequence ID" value="NC_001993.1"/>
</dbReference>
<dbReference type="SMR" id="Q9YW20"/>
<dbReference type="GeneID" id="1449891"/>
<dbReference type="KEGG" id="vg:1449891"/>
<dbReference type="OrthoDB" id="16550at10239"/>
<dbReference type="Proteomes" id="UP000172353">
    <property type="component" value="Segment"/>
</dbReference>
<dbReference type="GO" id="GO:0004379">
    <property type="term" value="F:glycylpeptide N-tetradecanoyltransferase activity"/>
    <property type="evidence" value="ECO:0007669"/>
    <property type="project" value="UniProtKB-EC"/>
</dbReference>
<dbReference type="CDD" id="cd04301">
    <property type="entry name" value="NAT_SF"/>
    <property type="match status" value="1"/>
</dbReference>
<dbReference type="Gene3D" id="3.40.630.170">
    <property type="match status" value="1"/>
</dbReference>
<dbReference type="InterPro" id="IPR016181">
    <property type="entry name" value="Acyl_CoA_acyltransferase"/>
</dbReference>
<dbReference type="InterPro" id="IPR022676">
    <property type="entry name" value="NMT_N"/>
</dbReference>
<dbReference type="Pfam" id="PF01233">
    <property type="entry name" value="NMT"/>
    <property type="match status" value="1"/>
</dbReference>
<dbReference type="SUPFAM" id="SSF55729">
    <property type="entry name" value="Acyl-CoA N-acyltransferases (Nat)"/>
    <property type="match status" value="1"/>
</dbReference>
<sequence>MNYWESKSICTVFTKYNDTEIINKIDPVKSNIDHSLYKQYTIGYMSNFNIVNICKFVNKHSNYIFDIDTFSWLVLNPFSDPSFNIVLYDNDKIVATIVGILRSIKIKNEIHKIIHTTFLTVDENYRKQGIHFYIIDKLMENAFNKGVLLGIFSTMKKIKKIKCVNVQDTYIIKSDSKKYKENNNVFDYKKLNQKNDDLYFIYNDMEIEYWFNKKYCHIISIYNNLFCFLKIKYKNNENLNILIEQYIHNKNINKYSIPNNSIMFSQYIQLPQIKLQNQIYTYIYNLNFNNLKCNICMF</sequence>
<protein>
    <recommendedName>
        <fullName>Putative glycylpeptide N-tetradecanoyltransferase</fullName>
        <ecNumber>2.3.1.97</ecNumber>
    </recommendedName>
    <alternativeName>
        <fullName>Myristoyl-CoA:protein N-myristoyltransferase</fullName>
        <shortName>NMT</shortName>
    </alternativeName>
    <alternativeName>
        <fullName>Peptide N-myristoyltransferase</fullName>
    </alternativeName>
</protein>
<keyword id="KW-0012">Acyltransferase</keyword>
<keyword id="KW-1185">Reference proteome</keyword>
<keyword id="KW-0808">Transferase</keyword>
<proteinExistence type="inferred from homology"/>
<accession>Q9YW20</accession>
<feature type="chain" id="PRO_0000064250" description="Putative glycylpeptide N-tetradecanoyltransferase">
    <location>
        <begin position="1"/>
        <end position="298"/>
    </location>
</feature>
<organism>
    <name type="scientific">Melanoplus sanguinipes entomopoxvirus</name>
    <name type="common">MsEPV</name>
    <dbReference type="NCBI Taxonomy" id="83191"/>
    <lineage>
        <taxon>Viruses</taxon>
        <taxon>Varidnaviria</taxon>
        <taxon>Bamfordvirae</taxon>
        <taxon>Nucleocytoviricota</taxon>
        <taxon>Pokkesviricetes</taxon>
        <taxon>Chitovirales</taxon>
        <taxon>Poxviridae</taxon>
        <taxon>Entomopoxvirinae</taxon>
        <taxon>Deltaentomopoxvirus</taxon>
    </lineage>
</organism>
<gene>
    <name type="ordered locus">MSV072</name>
</gene>
<evidence type="ECO:0000305" key="1"/>